<dbReference type="EMBL" id="FJ267632">
    <property type="protein sequence ID" value="ACJ05894.1"/>
    <property type="molecule type" value="Genomic_DNA"/>
</dbReference>
<dbReference type="EMBL" id="AL133363">
    <property type="protein sequence ID" value="CAB62477.1"/>
    <property type="molecule type" value="Genomic_DNA"/>
</dbReference>
<dbReference type="EMBL" id="CP002686">
    <property type="protein sequence ID" value="AEE78671.1"/>
    <property type="molecule type" value="Genomic_DNA"/>
</dbReference>
<dbReference type="EMBL" id="AF361849">
    <property type="protein sequence ID" value="AAK32861.1"/>
    <property type="molecule type" value="mRNA"/>
</dbReference>
<dbReference type="EMBL" id="BT000848">
    <property type="protein sequence ID" value="AAN38685.1"/>
    <property type="molecule type" value="mRNA"/>
</dbReference>
<dbReference type="EMBL" id="AK220594">
    <property type="protein sequence ID" value="BAD94912.1"/>
    <property type="molecule type" value="mRNA"/>
</dbReference>
<dbReference type="EMBL" id="AK229528">
    <property type="protein sequence ID" value="BAF01383.1"/>
    <property type="molecule type" value="mRNA"/>
</dbReference>
<dbReference type="PIR" id="T46079">
    <property type="entry name" value="T46079"/>
</dbReference>
<dbReference type="RefSeq" id="NP_566933.1">
    <property type="nucleotide sequence ID" value="NM_114908.5"/>
</dbReference>
<dbReference type="SMR" id="Q9SCS6"/>
<dbReference type="FunCoup" id="Q9SCS6">
    <property type="interactions" value="32"/>
</dbReference>
<dbReference type="STRING" id="3702.Q9SCS6"/>
<dbReference type="iPTMnet" id="Q9SCS6"/>
<dbReference type="PaxDb" id="3702-AT3G50480.1"/>
<dbReference type="ProteomicsDB" id="230234"/>
<dbReference type="EnsemblPlants" id="AT3G50480.1">
    <property type="protein sequence ID" value="AT3G50480.1"/>
    <property type="gene ID" value="AT3G50480"/>
</dbReference>
<dbReference type="GeneID" id="824212"/>
<dbReference type="Gramene" id="AT3G50480.1">
    <property type="protein sequence ID" value="AT3G50480.1"/>
    <property type="gene ID" value="AT3G50480"/>
</dbReference>
<dbReference type="KEGG" id="ath:AT3G50480"/>
<dbReference type="Araport" id="AT3G50480"/>
<dbReference type="TAIR" id="AT3G50480">
    <property type="gene designation" value="HR4"/>
</dbReference>
<dbReference type="HOGENOM" id="CLU_1367877_0_0_1"/>
<dbReference type="InParanoid" id="Q9SCS6"/>
<dbReference type="PhylomeDB" id="Q9SCS6"/>
<dbReference type="PRO" id="PR:Q9SCS6"/>
<dbReference type="Proteomes" id="UP000006548">
    <property type="component" value="Chromosome 3"/>
</dbReference>
<dbReference type="ExpressionAtlas" id="Q9SCS6">
    <property type="expression patterns" value="baseline and differential"/>
</dbReference>
<dbReference type="GO" id="GO:0016020">
    <property type="term" value="C:membrane"/>
    <property type="evidence" value="ECO:0007669"/>
    <property type="project" value="UniProtKB-SubCell"/>
</dbReference>
<dbReference type="GO" id="GO:0009626">
    <property type="term" value="P:plant-type hypersensitive response"/>
    <property type="evidence" value="ECO:0007669"/>
    <property type="project" value="UniProtKB-KW"/>
</dbReference>
<dbReference type="GO" id="GO:0009617">
    <property type="term" value="P:response to bacterium"/>
    <property type="evidence" value="ECO:0000270"/>
    <property type="project" value="UniProtKB"/>
</dbReference>
<dbReference type="GO" id="GO:0009723">
    <property type="term" value="P:response to ethylene"/>
    <property type="evidence" value="ECO:0000270"/>
    <property type="project" value="UniProtKB"/>
</dbReference>
<dbReference type="GO" id="GO:0043207">
    <property type="term" value="P:response to external biotic stimulus"/>
    <property type="evidence" value="ECO:0000270"/>
    <property type="project" value="UniProtKB"/>
</dbReference>
<dbReference type="GO" id="GO:0009620">
    <property type="term" value="P:response to fungus"/>
    <property type="evidence" value="ECO:0000270"/>
    <property type="project" value="UniProtKB"/>
</dbReference>
<dbReference type="GO" id="GO:0009753">
    <property type="term" value="P:response to jasmonic acid"/>
    <property type="evidence" value="ECO:0000270"/>
    <property type="project" value="UniProtKB"/>
</dbReference>
<dbReference type="GO" id="GO:0009751">
    <property type="term" value="P:response to salicylic acid"/>
    <property type="evidence" value="ECO:0000270"/>
    <property type="project" value="UniProtKB"/>
</dbReference>
<dbReference type="GO" id="GO:0009609">
    <property type="term" value="P:response to symbiotic bacterium"/>
    <property type="evidence" value="ECO:0000270"/>
    <property type="project" value="UniProtKB"/>
</dbReference>
<dbReference type="GO" id="GO:0009610">
    <property type="term" value="P:response to symbiotic fungus"/>
    <property type="evidence" value="ECO:0000270"/>
    <property type="project" value="UniProtKB"/>
</dbReference>
<dbReference type="InterPro" id="IPR008808">
    <property type="entry name" value="Powdery_mildew-R_dom"/>
</dbReference>
<dbReference type="Pfam" id="PF05659">
    <property type="entry name" value="RPW8"/>
    <property type="match status" value="1"/>
</dbReference>
<dbReference type="PROSITE" id="PS51153">
    <property type="entry name" value="RPW8"/>
    <property type="match status" value="1"/>
</dbReference>
<keyword id="KW-0175">Coiled coil</keyword>
<keyword id="KW-0381">Hypersensitive response</keyword>
<keyword id="KW-0472">Membrane</keyword>
<keyword id="KW-0611">Plant defense</keyword>
<keyword id="KW-1185">Reference proteome</keyword>
<keyword id="KW-0812">Transmembrane</keyword>
<keyword id="KW-1133">Transmembrane helix</keyword>
<protein>
    <recommendedName>
        <fullName>RPW8-like protein 4</fullName>
        <shortName evidence="6">AtHR4</shortName>
    </recommendedName>
</protein>
<evidence type="ECO:0000255" key="1"/>
<evidence type="ECO:0000255" key="2">
    <source>
        <dbReference type="PROSITE-ProRule" id="PRU00495"/>
    </source>
</evidence>
<evidence type="ECO:0000269" key="3">
    <source>
    </source>
</evidence>
<evidence type="ECO:0000269" key="4">
    <source>
    </source>
</evidence>
<evidence type="ECO:0000269" key="5">
    <source>
    </source>
</evidence>
<evidence type="ECO:0000303" key="6">
    <source>
    </source>
</evidence>
<evidence type="ECO:0000305" key="7"/>
<evidence type="ECO:0000305" key="8">
    <source>
    </source>
</evidence>
<evidence type="ECO:0000305" key="9">
    <source>
    </source>
</evidence>
<evidence type="ECO:0000312" key="10">
    <source>
        <dbReference type="Araport" id="AT3G50480"/>
    </source>
</evidence>
<evidence type="ECO:0000312" key="11">
    <source>
        <dbReference type="EMBL" id="CAB62477.1"/>
    </source>
</evidence>
<evidence type="ECO:0000312" key="12">
    <source>
        <dbReference type="Proteomes" id="UP000006548"/>
    </source>
</evidence>
<accession>Q9SCS6</accession>
<accession>Q0WNB7</accession>
<accession>Q570W3</accession>
<comment type="function">
    <text evidence="7">Probable disease resistance (R) protein.</text>
</comment>
<comment type="subcellular location">
    <subcellularLocation>
        <location evidence="1">Membrane</location>
        <topology evidence="1">Single-pass membrane protein</topology>
    </subcellularLocation>
</comment>
<comment type="induction">
    <text evidence="3 4 5">Expressed in leaves after powdery mildew infection (e.g. Erysiphe cichoracearum UCSC1) (PubMed:15155802). Accumulates upon oviposition by pierid butterflies (e.g. Pieris brassicae) (PubMed:17142483). Induced in seedlings by the beneficial symbiotic fungus Trichoderma atroviride and, by the plant growth-promoting rhizobacterium (PGPR) Pseudomonas fluorescens after a transient repression (PubMed:22942755). Expressed after infection by the bacterial pathogenic Pseudomonas syringae pv. tomato DC3000 (PubMed:22942755). Triggered by various phytohormones such as ethylene (ET), salicylic acid (SA) and methyl jasmonate (MeJA) (PubMed:22942755).</text>
</comment>
<comment type="miscellaneous">
    <text evidence="8 9">Ecotypes susceptible to Erysiphe cichoracearum, such as cv. Columbia, are lacking RPW8.1 and RPW8.2 but contain in place HR4.</text>
</comment>
<comment type="similarity">
    <text evidence="7">Belongs to the plant RPW8 protein family.</text>
</comment>
<organism evidence="12">
    <name type="scientific">Arabidopsis thaliana</name>
    <name type="common">Mouse-ear cress</name>
    <dbReference type="NCBI Taxonomy" id="3702"/>
    <lineage>
        <taxon>Eukaryota</taxon>
        <taxon>Viridiplantae</taxon>
        <taxon>Streptophyta</taxon>
        <taxon>Embryophyta</taxon>
        <taxon>Tracheophyta</taxon>
        <taxon>Spermatophyta</taxon>
        <taxon>Magnoliopsida</taxon>
        <taxon>eudicotyledons</taxon>
        <taxon>Gunneridae</taxon>
        <taxon>Pentapetalae</taxon>
        <taxon>rosids</taxon>
        <taxon>malvids</taxon>
        <taxon>Brassicales</taxon>
        <taxon>Brassicaceae</taxon>
        <taxon>Camelineae</taxon>
        <taxon>Arabidopsis</taxon>
    </lineage>
</organism>
<feature type="chain" id="PRO_0000431674" description="RPW8-like protein 4">
    <location>
        <begin position="1"/>
        <end position="200"/>
    </location>
</feature>
<feature type="transmembrane region" description="Helical" evidence="1">
    <location>
        <begin position="7"/>
        <end position="29"/>
    </location>
</feature>
<feature type="domain" description="RPW8" evidence="2">
    <location>
        <begin position="1"/>
        <end position="157"/>
    </location>
</feature>
<feature type="coiled-coil region" evidence="1">
    <location>
        <begin position="70"/>
        <end position="127"/>
    </location>
</feature>
<feature type="sequence conflict" description="In Ref. 5; BAF01383." evidence="7" ref="5">
    <original>R</original>
    <variation>W</variation>
    <location>
        <position position="118"/>
    </location>
</feature>
<feature type="sequence conflict" description="In Ref. 5; BAD94912." evidence="7" ref="5">
    <original>HNK</original>
    <variation>Q</variation>
    <location>
        <begin position="198"/>
        <end position="200"/>
    </location>
</feature>
<gene>
    <name type="primary">HR4</name>
    <name evidence="10" type="ordered locus">At3g50480</name>
    <name evidence="11" type="ORF">T20E23.80</name>
</gene>
<reference key="1">
    <citation type="journal article" date="2008" name="Mol. Ecol.">
        <title>Functional variation in a disease resistance gene in populations of Arabidopsis thaliana.</title>
        <authorList>
            <person name="Jorgensen T.H."/>
            <person name="Emerson B.C."/>
        </authorList>
    </citation>
    <scope>NUCLEOTIDE SEQUENCE [GENOMIC DNA]</scope>
</reference>
<reference key="2">
    <citation type="journal article" date="2000" name="Nature">
        <title>Sequence and analysis of chromosome 3 of the plant Arabidopsis thaliana.</title>
        <authorList>
            <person name="Salanoubat M."/>
            <person name="Lemcke K."/>
            <person name="Rieger M."/>
            <person name="Ansorge W."/>
            <person name="Unseld M."/>
            <person name="Fartmann B."/>
            <person name="Valle G."/>
            <person name="Bloecker H."/>
            <person name="Perez-Alonso M."/>
            <person name="Obermaier B."/>
            <person name="Delseny M."/>
            <person name="Boutry M."/>
            <person name="Grivell L.A."/>
            <person name="Mache R."/>
            <person name="Puigdomenech P."/>
            <person name="De Simone V."/>
            <person name="Choisne N."/>
            <person name="Artiguenave F."/>
            <person name="Robert C."/>
            <person name="Brottier P."/>
            <person name="Wincker P."/>
            <person name="Cattolico L."/>
            <person name="Weissenbach J."/>
            <person name="Saurin W."/>
            <person name="Quetier F."/>
            <person name="Schaefer M."/>
            <person name="Mueller-Auer S."/>
            <person name="Gabel C."/>
            <person name="Fuchs M."/>
            <person name="Benes V."/>
            <person name="Wurmbach E."/>
            <person name="Drzonek H."/>
            <person name="Erfle H."/>
            <person name="Jordan N."/>
            <person name="Bangert S."/>
            <person name="Wiedelmann R."/>
            <person name="Kranz H."/>
            <person name="Voss H."/>
            <person name="Holland R."/>
            <person name="Brandt P."/>
            <person name="Nyakatura G."/>
            <person name="Vezzi A."/>
            <person name="D'Angelo M."/>
            <person name="Pallavicini A."/>
            <person name="Toppo S."/>
            <person name="Simionati B."/>
            <person name="Conrad A."/>
            <person name="Hornischer K."/>
            <person name="Kauer G."/>
            <person name="Loehnert T.-H."/>
            <person name="Nordsiek G."/>
            <person name="Reichelt J."/>
            <person name="Scharfe M."/>
            <person name="Schoen O."/>
            <person name="Bargues M."/>
            <person name="Terol J."/>
            <person name="Climent J."/>
            <person name="Navarro P."/>
            <person name="Collado C."/>
            <person name="Perez-Perez A."/>
            <person name="Ottenwaelder B."/>
            <person name="Duchemin D."/>
            <person name="Cooke R."/>
            <person name="Laudie M."/>
            <person name="Berger-Llauro C."/>
            <person name="Purnelle B."/>
            <person name="Masuy D."/>
            <person name="de Haan M."/>
            <person name="Maarse A.C."/>
            <person name="Alcaraz J.-P."/>
            <person name="Cottet A."/>
            <person name="Casacuberta E."/>
            <person name="Monfort A."/>
            <person name="Argiriou A."/>
            <person name="Flores M."/>
            <person name="Liguori R."/>
            <person name="Vitale D."/>
            <person name="Mannhaupt G."/>
            <person name="Haase D."/>
            <person name="Schoof H."/>
            <person name="Rudd S."/>
            <person name="Zaccaria P."/>
            <person name="Mewes H.-W."/>
            <person name="Mayer K.F.X."/>
            <person name="Kaul S."/>
            <person name="Town C.D."/>
            <person name="Koo H.L."/>
            <person name="Tallon L.J."/>
            <person name="Jenkins J."/>
            <person name="Rooney T."/>
            <person name="Rizzo M."/>
            <person name="Walts A."/>
            <person name="Utterback T."/>
            <person name="Fujii C.Y."/>
            <person name="Shea T.P."/>
            <person name="Creasy T.H."/>
            <person name="Haas B."/>
            <person name="Maiti R."/>
            <person name="Wu D."/>
            <person name="Peterson J."/>
            <person name="Van Aken S."/>
            <person name="Pai G."/>
            <person name="Militscher J."/>
            <person name="Sellers P."/>
            <person name="Gill J.E."/>
            <person name="Feldblyum T.V."/>
            <person name="Preuss D."/>
            <person name="Lin X."/>
            <person name="Nierman W.C."/>
            <person name="Salzberg S.L."/>
            <person name="White O."/>
            <person name="Venter J.C."/>
            <person name="Fraser C.M."/>
            <person name="Kaneko T."/>
            <person name="Nakamura Y."/>
            <person name="Sato S."/>
            <person name="Kato T."/>
            <person name="Asamizu E."/>
            <person name="Sasamoto S."/>
            <person name="Kimura T."/>
            <person name="Idesawa K."/>
            <person name="Kawashima K."/>
            <person name="Kishida Y."/>
            <person name="Kiyokawa C."/>
            <person name="Kohara M."/>
            <person name="Matsumoto M."/>
            <person name="Matsuno A."/>
            <person name="Muraki A."/>
            <person name="Nakayama S."/>
            <person name="Nakazaki N."/>
            <person name="Shinpo S."/>
            <person name="Takeuchi C."/>
            <person name="Wada T."/>
            <person name="Watanabe A."/>
            <person name="Yamada M."/>
            <person name="Yasuda M."/>
            <person name="Tabata S."/>
        </authorList>
    </citation>
    <scope>NUCLEOTIDE SEQUENCE [LARGE SCALE GENOMIC DNA]</scope>
    <source>
        <strain>cv. Columbia</strain>
    </source>
</reference>
<reference key="3">
    <citation type="journal article" date="2017" name="Plant J.">
        <title>Araport11: a complete reannotation of the Arabidopsis thaliana reference genome.</title>
        <authorList>
            <person name="Cheng C.Y."/>
            <person name="Krishnakumar V."/>
            <person name="Chan A.P."/>
            <person name="Thibaud-Nissen F."/>
            <person name="Schobel S."/>
            <person name="Town C.D."/>
        </authorList>
    </citation>
    <scope>GENOME REANNOTATION</scope>
    <source>
        <strain>cv. Columbia</strain>
    </source>
</reference>
<reference key="4">
    <citation type="journal article" date="2003" name="Science">
        <title>Empirical analysis of transcriptional activity in the Arabidopsis genome.</title>
        <authorList>
            <person name="Yamada K."/>
            <person name="Lim J."/>
            <person name="Dale J.M."/>
            <person name="Chen H."/>
            <person name="Shinn P."/>
            <person name="Palm C.J."/>
            <person name="Southwick A.M."/>
            <person name="Wu H.C."/>
            <person name="Kim C.J."/>
            <person name="Nguyen M."/>
            <person name="Pham P.K."/>
            <person name="Cheuk R.F."/>
            <person name="Karlin-Newmann G."/>
            <person name="Liu S.X."/>
            <person name="Lam B."/>
            <person name="Sakano H."/>
            <person name="Wu T."/>
            <person name="Yu G."/>
            <person name="Miranda M."/>
            <person name="Quach H.L."/>
            <person name="Tripp M."/>
            <person name="Chang C.H."/>
            <person name="Lee J.M."/>
            <person name="Toriumi M.J."/>
            <person name="Chan M.M."/>
            <person name="Tang C.C."/>
            <person name="Onodera C.S."/>
            <person name="Deng J.M."/>
            <person name="Akiyama K."/>
            <person name="Ansari Y."/>
            <person name="Arakawa T."/>
            <person name="Banh J."/>
            <person name="Banno F."/>
            <person name="Bowser L."/>
            <person name="Brooks S.Y."/>
            <person name="Carninci P."/>
            <person name="Chao Q."/>
            <person name="Choy N."/>
            <person name="Enju A."/>
            <person name="Goldsmith A.D."/>
            <person name="Gurjal M."/>
            <person name="Hansen N.F."/>
            <person name="Hayashizaki Y."/>
            <person name="Johnson-Hopson C."/>
            <person name="Hsuan V.W."/>
            <person name="Iida K."/>
            <person name="Karnes M."/>
            <person name="Khan S."/>
            <person name="Koesema E."/>
            <person name="Ishida J."/>
            <person name="Jiang P.X."/>
            <person name="Jones T."/>
            <person name="Kawai J."/>
            <person name="Kamiya A."/>
            <person name="Meyers C."/>
            <person name="Nakajima M."/>
            <person name="Narusaka M."/>
            <person name="Seki M."/>
            <person name="Sakurai T."/>
            <person name="Satou M."/>
            <person name="Tamse R."/>
            <person name="Vaysberg M."/>
            <person name="Wallender E.K."/>
            <person name="Wong C."/>
            <person name="Yamamura Y."/>
            <person name="Yuan S."/>
            <person name="Shinozaki K."/>
            <person name="Davis R.W."/>
            <person name="Theologis A."/>
            <person name="Ecker J.R."/>
        </authorList>
    </citation>
    <scope>NUCLEOTIDE SEQUENCE [LARGE SCALE MRNA]</scope>
    <source>
        <strain>cv. Columbia</strain>
    </source>
</reference>
<reference key="5">
    <citation type="submission" date="2006-07" db="EMBL/GenBank/DDBJ databases">
        <title>Large-scale analysis of RIKEN Arabidopsis full-length (RAFL) cDNAs.</title>
        <authorList>
            <person name="Totoki Y."/>
            <person name="Seki M."/>
            <person name="Ishida J."/>
            <person name="Nakajima M."/>
            <person name="Enju A."/>
            <person name="Kamiya A."/>
            <person name="Narusaka M."/>
            <person name="Shin-i T."/>
            <person name="Nakagawa M."/>
            <person name="Sakamoto N."/>
            <person name="Oishi K."/>
            <person name="Kohara Y."/>
            <person name="Kobayashi M."/>
            <person name="Toyoda A."/>
            <person name="Sakaki Y."/>
            <person name="Sakurai T."/>
            <person name="Iida K."/>
            <person name="Akiyama K."/>
            <person name="Satou M."/>
            <person name="Toyoda T."/>
            <person name="Konagaya A."/>
            <person name="Carninci P."/>
            <person name="Kawai J."/>
            <person name="Hayashizaki Y."/>
            <person name="Shinozaki K."/>
        </authorList>
    </citation>
    <scope>NUCLEOTIDE SEQUENCE [LARGE SCALE MRNA]</scope>
    <source>
        <strain>cv. Columbia</strain>
    </source>
</reference>
<reference key="6">
    <citation type="journal article" date="2001" name="Science">
        <title>Broad-spectrum mildew resistance in Arabidopsis thaliana mediated by RPW8.</title>
        <authorList>
            <person name="Xiao S."/>
            <person name="Ellwood S."/>
            <person name="Calis O."/>
            <person name="Patrick E."/>
            <person name="Li T."/>
            <person name="Coleman M."/>
            <person name="Turner J.G."/>
        </authorList>
    </citation>
    <scope>MISCELLANEOUS</scope>
    <scope>GENE FAMILY</scope>
    <scope>NOMENCLATURE</scope>
    <source>
        <strain>cv. Ms-0</strain>
    </source>
</reference>
<reference key="7">
    <citation type="journal article" date="2004" name="Mol. Biol. Evol.">
        <title>Origin and maintenance of a broad-spectrum disease resistance locus in Arabidopsis.</title>
        <authorList>
            <person name="Xiao S."/>
            <person name="Emerson B."/>
            <person name="Ratanasut K."/>
            <person name="Patrick E."/>
            <person name="O'Neill C."/>
            <person name="Bancroft I."/>
            <person name="Turner J.G."/>
        </authorList>
    </citation>
    <scope>INDUCTION BY ERYSIPHE CICHORACEARUM</scope>
    <scope>MISCELLANEOUS</scope>
    <scope>GENE FAMILY</scope>
</reference>
<reference key="8">
    <citation type="journal article" date="2007" name="Plant Physiol.">
        <title>Oviposition by pierid butterflies triggers defense responses in Arabidopsis.</title>
        <authorList>
            <person name="Little D."/>
            <person name="Gouhier-Darimont C."/>
            <person name="Bruessow F."/>
            <person name="Reymond P."/>
        </authorList>
    </citation>
    <scope>INDUCTION BY PIERIS BRASSICAE OVIPOSITION</scope>
</reference>
<reference key="9">
    <citation type="journal article" date="2012" name="Int. J. Mol. Sci.">
        <title>HR4 gene is induced in the Arabidopsis-trichoderma atroviride beneficial interaction.</title>
        <authorList>
            <person name="Saenz-Mata J."/>
            <person name="Jimenez-Bremont J.F."/>
        </authorList>
    </citation>
    <scope>INDUCTION BY MICROORGANISMS AND PHYTOHORMONES</scope>
    <source>
        <strain>cv. Columbia</strain>
    </source>
</reference>
<sequence>MPIAELAVIKTVGGPLIAAALGVGAQVIYDGFRKGKDTSIINRLGRTMESISPVRDRIGKLSNVEGKPFREVHESLTRLLEDAKSIIEKYWKLRWSRHVCRKYRYIKKLESIELELVRVAREIQVHQWTDIKEMKAIQVHQWTDIKEMKAIQVDQWTDIKEMKAIQVDQWIDIKEMKAIQVDQWTDIKEMKAQISEKHNK</sequence>
<name>HR4_ARATH</name>
<proteinExistence type="evidence at transcript level"/>